<keyword id="KW-0963">Cytoplasm</keyword>
<keyword id="KW-0378">Hydrolase</keyword>
<keyword id="KW-0645">Protease</keyword>
<keyword id="KW-0720">Serine protease</keyword>
<protein>
    <recommendedName>
        <fullName evidence="1">ATP-dependent Clp protease proteolytic subunit</fullName>
        <ecNumber evidence="1">3.4.21.92</ecNumber>
    </recommendedName>
    <alternativeName>
        <fullName evidence="1">Endopeptidase Clp</fullName>
    </alternativeName>
</protein>
<gene>
    <name evidence="1" type="primary">clpP</name>
    <name type="ordered locus">RPA2961</name>
</gene>
<evidence type="ECO:0000255" key="1">
    <source>
        <dbReference type="HAMAP-Rule" id="MF_00444"/>
    </source>
</evidence>
<accession>Q6N5L3</accession>
<comment type="function">
    <text evidence="1">Cleaves peptides in various proteins in a process that requires ATP hydrolysis. Has a chymotrypsin-like activity. Plays a major role in the degradation of misfolded proteins.</text>
</comment>
<comment type="catalytic activity">
    <reaction evidence="1">
        <text>Hydrolysis of proteins to small peptides in the presence of ATP and magnesium. alpha-casein is the usual test substrate. In the absence of ATP, only oligopeptides shorter than five residues are hydrolyzed (such as succinyl-Leu-Tyr-|-NHMec, and Leu-Tyr-Leu-|-Tyr-Trp, in which cleavage of the -Tyr-|-Leu- and -Tyr-|-Trp bonds also occurs).</text>
        <dbReference type="EC" id="3.4.21.92"/>
    </reaction>
</comment>
<comment type="subunit">
    <text evidence="1">Fourteen ClpP subunits assemble into 2 heptameric rings which stack back to back to give a disk-like structure with a central cavity, resembling the structure of eukaryotic proteasomes.</text>
</comment>
<comment type="subcellular location">
    <subcellularLocation>
        <location evidence="1">Cytoplasm</location>
    </subcellularLocation>
</comment>
<comment type="similarity">
    <text evidence="1">Belongs to the peptidase S14 family.</text>
</comment>
<reference key="1">
    <citation type="journal article" date="2004" name="Nat. Biotechnol.">
        <title>Complete genome sequence of the metabolically versatile photosynthetic bacterium Rhodopseudomonas palustris.</title>
        <authorList>
            <person name="Larimer F.W."/>
            <person name="Chain P."/>
            <person name="Hauser L."/>
            <person name="Lamerdin J.E."/>
            <person name="Malfatti S."/>
            <person name="Do L."/>
            <person name="Land M.L."/>
            <person name="Pelletier D.A."/>
            <person name="Beatty J.T."/>
            <person name="Lang A.S."/>
            <person name="Tabita F.R."/>
            <person name="Gibson J.L."/>
            <person name="Hanson T.E."/>
            <person name="Bobst C."/>
            <person name="Torres y Torres J.L."/>
            <person name="Peres C."/>
            <person name="Harrison F.H."/>
            <person name="Gibson J."/>
            <person name="Harwood C.S."/>
        </authorList>
    </citation>
    <scope>NUCLEOTIDE SEQUENCE [LARGE SCALE GENOMIC DNA]</scope>
    <source>
        <strain>ATCC BAA-98 / CGA009</strain>
    </source>
</reference>
<name>CLPP_RHOPA</name>
<proteinExistence type="inferred from homology"/>
<dbReference type="EC" id="3.4.21.92" evidence="1"/>
<dbReference type="EMBL" id="BX572602">
    <property type="protein sequence ID" value="CAE28402.1"/>
    <property type="molecule type" value="Genomic_DNA"/>
</dbReference>
<dbReference type="RefSeq" id="WP_011158510.1">
    <property type="nucleotide sequence ID" value="NZ_CP116810.1"/>
</dbReference>
<dbReference type="SMR" id="Q6N5L3"/>
<dbReference type="STRING" id="258594.RPA2961"/>
<dbReference type="MEROPS" id="S14.001"/>
<dbReference type="eggNOG" id="COG0740">
    <property type="taxonomic scope" value="Bacteria"/>
</dbReference>
<dbReference type="HOGENOM" id="CLU_058707_3_2_5"/>
<dbReference type="PhylomeDB" id="Q6N5L3"/>
<dbReference type="GO" id="GO:0005737">
    <property type="term" value="C:cytoplasm"/>
    <property type="evidence" value="ECO:0007669"/>
    <property type="project" value="UniProtKB-SubCell"/>
</dbReference>
<dbReference type="GO" id="GO:0009368">
    <property type="term" value="C:endopeptidase Clp complex"/>
    <property type="evidence" value="ECO:0007669"/>
    <property type="project" value="TreeGrafter"/>
</dbReference>
<dbReference type="GO" id="GO:0004176">
    <property type="term" value="F:ATP-dependent peptidase activity"/>
    <property type="evidence" value="ECO:0007669"/>
    <property type="project" value="InterPro"/>
</dbReference>
<dbReference type="GO" id="GO:0051117">
    <property type="term" value="F:ATPase binding"/>
    <property type="evidence" value="ECO:0007669"/>
    <property type="project" value="TreeGrafter"/>
</dbReference>
<dbReference type="GO" id="GO:0004252">
    <property type="term" value="F:serine-type endopeptidase activity"/>
    <property type="evidence" value="ECO:0007669"/>
    <property type="project" value="UniProtKB-UniRule"/>
</dbReference>
<dbReference type="GO" id="GO:0006515">
    <property type="term" value="P:protein quality control for misfolded or incompletely synthesized proteins"/>
    <property type="evidence" value="ECO:0007669"/>
    <property type="project" value="TreeGrafter"/>
</dbReference>
<dbReference type="CDD" id="cd07017">
    <property type="entry name" value="S14_ClpP_2"/>
    <property type="match status" value="1"/>
</dbReference>
<dbReference type="FunFam" id="3.90.226.10:FF:000001">
    <property type="entry name" value="ATP-dependent Clp protease proteolytic subunit"/>
    <property type="match status" value="1"/>
</dbReference>
<dbReference type="Gene3D" id="3.90.226.10">
    <property type="entry name" value="2-enoyl-CoA Hydratase, Chain A, domain 1"/>
    <property type="match status" value="1"/>
</dbReference>
<dbReference type="HAMAP" id="MF_00444">
    <property type="entry name" value="ClpP"/>
    <property type="match status" value="1"/>
</dbReference>
<dbReference type="InterPro" id="IPR001907">
    <property type="entry name" value="ClpP"/>
</dbReference>
<dbReference type="InterPro" id="IPR029045">
    <property type="entry name" value="ClpP/crotonase-like_dom_sf"/>
</dbReference>
<dbReference type="InterPro" id="IPR023562">
    <property type="entry name" value="ClpP/TepA"/>
</dbReference>
<dbReference type="InterPro" id="IPR033135">
    <property type="entry name" value="ClpP_His_AS"/>
</dbReference>
<dbReference type="NCBIfam" id="NF001368">
    <property type="entry name" value="PRK00277.1"/>
    <property type="match status" value="1"/>
</dbReference>
<dbReference type="NCBIfam" id="NF009205">
    <property type="entry name" value="PRK12553.1"/>
    <property type="match status" value="1"/>
</dbReference>
<dbReference type="PANTHER" id="PTHR10381">
    <property type="entry name" value="ATP-DEPENDENT CLP PROTEASE PROTEOLYTIC SUBUNIT"/>
    <property type="match status" value="1"/>
</dbReference>
<dbReference type="PANTHER" id="PTHR10381:SF70">
    <property type="entry name" value="ATP-DEPENDENT CLP PROTEASE PROTEOLYTIC SUBUNIT"/>
    <property type="match status" value="1"/>
</dbReference>
<dbReference type="Pfam" id="PF00574">
    <property type="entry name" value="CLP_protease"/>
    <property type="match status" value="1"/>
</dbReference>
<dbReference type="PRINTS" id="PR00127">
    <property type="entry name" value="CLPPROTEASEP"/>
</dbReference>
<dbReference type="SUPFAM" id="SSF52096">
    <property type="entry name" value="ClpP/crotonase"/>
    <property type="match status" value="1"/>
</dbReference>
<dbReference type="PROSITE" id="PS00382">
    <property type="entry name" value="CLP_PROTEASE_HIS"/>
    <property type="match status" value="1"/>
</dbReference>
<sequence>MRDPVETYMNLVPMVVEQTNRGERAYDIFSRLLKERIIFVTGPVEDGMSTLIVAQLLFLEAENPKKEISMYINSPGGVVTSGLAIYDTMQFIRPPVSTLCTGQAASMGSLLLAAGHKDMRFSLPNARIMVHQPSGGFQGQATDIMLHAQEILNLKKRLNEIYVHHTGQTYKAIEDALERDKFLTAEMAREFGIVDKVIEKRPEDPAPAPKAA</sequence>
<feature type="chain" id="PRO_0000179638" description="ATP-dependent Clp protease proteolytic subunit">
    <location>
        <begin position="1"/>
        <end position="212"/>
    </location>
</feature>
<feature type="active site" description="Nucleophile" evidence="1">
    <location>
        <position position="106"/>
    </location>
</feature>
<feature type="active site" evidence="1">
    <location>
        <position position="131"/>
    </location>
</feature>
<organism>
    <name type="scientific">Rhodopseudomonas palustris (strain ATCC BAA-98 / CGA009)</name>
    <dbReference type="NCBI Taxonomy" id="258594"/>
    <lineage>
        <taxon>Bacteria</taxon>
        <taxon>Pseudomonadati</taxon>
        <taxon>Pseudomonadota</taxon>
        <taxon>Alphaproteobacteria</taxon>
        <taxon>Hyphomicrobiales</taxon>
        <taxon>Nitrobacteraceae</taxon>
        <taxon>Rhodopseudomonas</taxon>
    </lineage>
</organism>